<gene>
    <name type="primary">ensa</name>
    <name type="ORF">si:dkey-24a7.3</name>
</gene>
<protein>
    <recommendedName>
        <fullName>Alpha-endosulfine</fullName>
    </recommendedName>
</protein>
<name>ENSA_DANRE</name>
<evidence type="ECO:0000250" key="1"/>
<evidence type="ECO:0000256" key="2">
    <source>
        <dbReference type="SAM" id="MobiDB-lite"/>
    </source>
</evidence>
<evidence type="ECO:0000303" key="3">
    <source ref="2"/>
</evidence>
<evidence type="ECO:0000305" key="4"/>
<dbReference type="EMBL" id="CR548627">
    <property type="protein sequence ID" value="CAK11346.1"/>
    <property type="molecule type" value="Genomic_DNA"/>
</dbReference>
<dbReference type="EMBL" id="BC162796">
    <property type="protein sequence ID" value="AAI62796.1"/>
    <property type="molecule type" value="mRNA"/>
</dbReference>
<dbReference type="RefSeq" id="NP_001038649.1">
    <molecule id="Q1L8X2-1"/>
    <property type="nucleotide sequence ID" value="NM_001045184.1"/>
</dbReference>
<dbReference type="RefSeq" id="XP_005159372.1">
    <molecule id="Q1L8X2-2"/>
    <property type="nucleotide sequence ID" value="XM_005159315.3"/>
</dbReference>
<dbReference type="SMR" id="Q1L8X2"/>
<dbReference type="FunCoup" id="Q1L8X2">
    <property type="interactions" value="68"/>
</dbReference>
<dbReference type="STRING" id="7955.ENSDARP00000125983"/>
<dbReference type="PaxDb" id="7955-ENSDARP00000053641"/>
<dbReference type="Ensembl" id="ENSDART00000187622">
    <molecule id="Q1L8X2-1"/>
    <property type="protein sequence ID" value="ENSDARP00000149317"/>
    <property type="gene ID" value="ENSDARG00000036944"/>
</dbReference>
<dbReference type="GeneID" id="569530"/>
<dbReference type="KEGG" id="dre:569530"/>
<dbReference type="AGR" id="ZFIN:ZDB-GENE-060503-181"/>
<dbReference type="CTD" id="569530"/>
<dbReference type="ZFIN" id="ZDB-GENE-060503-181">
    <property type="gene designation" value="ensaa"/>
</dbReference>
<dbReference type="eggNOG" id="KOG4076">
    <property type="taxonomic scope" value="Eukaryota"/>
</dbReference>
<dbReference type="HOGENOM" id="CLU_125025_1_0_1"/>
<dbReference type="InParanoid" id="Q1L8X2"/>
<dbReference type="OMA" id="TNSEPAC"/>
<dbReference type="OrthoDB" id="5949865at2759"/>
<dbReference type="PhylomeDB" id="Q1L8X2"/>
<dbReference type="TreeFam" id="TF314718"/>
<dbReference type="PRO" id="PR:Q1L8X2"/>
<dbReference type="Proteomes" id="UP000000437">
    <property type="component" value="Chromosome 19"/>
</dbReference>
<dbReference type="Bgee" id="ENSDARG00000036944">
    <property type="expression patterns" value="Expressed in retina and 20 other cell types or tissues"/>
</dbReference>
<dbReference type="GO" id="GO:0005737">
    <property type="term" value="C:cytoplasm"/>
    <property type="evidence" value="ECO:0000318"/>
    <property type="project" value="GO_Central"/>
</dbReference>
<dbReference type="GO" id="GO:0019212">
    <property type="term" value="F:phosphatase inhibitor activity"/>
    <property type="evidence" value="ECO:0000250"/>
    <property type="project" value="UniProtKB"/>
</dbReference>
<dbReference type="GO" id="GO:0051721">
    <property type="term" value="F:protein phosphatase 2A binding"/>
    <property type="evidence" value="ECO:0000250"/>
    <property type="project" value="UniProtKB"/>
</dbReference>
<dbReference type="GO" id="GO:0004864">
    <property type="term" value="F:protein phosphatase inhibitor activity"/>
    <property type="evidence" value="ECO:0000318"/>
    <property type="project" value="GO_Central"/>
</dbReference>
<dbReference type="GO" id="GO:0019888">
    <property type="term" value="F:protein phosphatase regulator activity"/>
    <property type="evidence" value="ECO:0000250"/>
    <property type="project" value="UniProtKB"/>
</dbReference>
<dbReference type="GO" id="GO:0051301">
    <property type="term" value="P:cell division"/>
    <property type="evidence" value="ECO:0007669"/>
    <property type="project" value="UniProtKB-KW"/>
</dbReference>
<dbReference type="GO" id="GO:0000086">
    <property type="term" value="P:G2/M transition of mitotic cell cycle"/>
    <property type="evidence" value="ECO:0000250"/>
    <property type="project" value="UniProtKB"/>
</dbReference>
<dbReference type="GO" id="GO:0000278">
    <property type="term" value="P:mitotic cell cycle"/>
    <property type="evidence" value="ECO:0000250"/>
    <property type="project" value="UniProtKB"/>
</dbReference>
<dbReference type="InterPro" id="IPR006760">
    <property type="entry name" value="Endosulphine"/>
</dbReference>
<dbReference type="PANTHER" id="PTHR10358:SF21">
    <property type="entry name" value="ALPHA-ENDOSULFINE"/>
    <property type="match status" value="1"/>
</dbReference>
<dbReference type="PANTHER" id="PTHR10358">
    <property type="entry name" value="ENDOSULFINE"/>
    <property type="match status" value="1"/>
</dbReference>
<dbReference type="Pfam" id="PF04667">
    <property type="entry name" value="Endosulfine"/>
    <property type="match status" value="1"/>
</dbReference>
<comment type="function">
    <text evidence="1">Protein phosphatase inhibitor that specifically inhibits protein phosphatase 2A (PP2A) during mitosis. When phosphorylated at Ser-67 during mitosis, specifically interacts with ppp2r2d (PR55-delta) and inhibits its activity, leading to inactivation of PP2A, an essential condition to keep cyclin-B1-CDK1 activity high during M phase (By similarity).</text>
</comment>
<comment type="subcellular location">
    <subcellularLocation>
        <location evidence="1">Cytoplasm</location>
    </subcellularLocation>
</comment>
<comment type="alternative products">
    <event type="alternative splicing"/>
    <isoform>
        <id>Q1L8X2-1</id>
        <name>1</name>
        <sequence type="displayed"/>
    </isoform>
    <isoform>
        <id>Q1L8X2-2</id>
        <name>2</name>
        <sequence type="described" ref="VSP_037071"/>
    </isoform>
</comment>
<comment type="PTM">
    <text evidence="1">Phosphorylation at Ser-74 by gwl during mitosis is essential for interaction with ppp2r2d (PR55-delta) and subsequent inactivation of PP2A.</text>
</comment>
<comment type="similarity">
    <text evidence="4">Belongs to the endosulfine family.</text>
</comment>
<sequence length="124" mass="13756">MSENPDDLELESEEKQCELKSGCVYLQDSPEKTCNPILSEEAKLKAKYPSLGHKPGGSDFLMKRLQKGQKYFDSGDYNMAKAKMKSKHVVQSAAEKSLVTGDHIPTPQDLPQRKNTILTSKLAG</sequence>
<accession>Q1L8X2</accession>
<accession>B3DHK3</accession>
<feature type="chain" id="PRO_0000371564" description="Alpha-endosulfine">
    <location>
        <begin position="1"/>
        <end position="124"/>
    </location>
</feature>
<feature type="region of interest" description="Disordered" evidence="2">
    <location>
        <begin position="99"/>
        <end position="124"/>
    </location>
</feature>
<feature type="compositionally biased region" description="Polar residues" evidence="2">
    <location>
        <begin position="113"/>
        <end position="124"/>
    </location>
</feature>
<feature type="modified residue" description="Phosphoserine; by GWL" evidence="1">
    <location>
        <position position="74"/>
    </location>
</feature>
<feature type="splice variant" id="VSP_037071" description="In isoform 2." evidence="3">
    <location>
        <begin position="16"/>
        <end position="26"/>
    </location>
</feature>
<organism>
    <name type="scientific">Danio rerio</name>
    <name type="common">Zebrafish</name>
    <name type="synonym">Brachydanio rerio</name>
    <dbReference type="NCBI Taxonomy" id="7955"/>
    <lineage>
        <taxon>Eukaryota</taxon>
        <taxon>Metazoa</taxon>
        <taxon>Chordata</taxon>
        <taxon>Craniata</taxon>
        <taxon>Vertebrata</taxon>
        <taxon>Euteleostomi</taxon>
        <taxon>Actinopterygii</taxon>
        <taxon>Neopterygii</taxon>
        <taxon>Teleostei</taxon>
        <taxon>Ostariophysi</taxon>
        <taxon>Cypriniformes</taxon>
        <taxon>Danionidae</taxon>
        <taxon>Danioninae</taxon>
        <taxon>Danio</taxon>
    </lineage>
</organism>
<proteinExistence type="evidence at transcript level"/>
<reference key="1">
    <citation type="journal article" date="2013" name="Nature">
        <title>The zebrafish reference genome sequence and its relationship to the human genome.</title>
        <authorList>
            <person name="Howe K."/>
            <person name="Clark M.D."/>
            <person name="Torroja C.F."/>
            <person name="Torrance J."/>
            <person name="Berthelot C."/>
            <person name="Muffato M."/>
            <person name="Collins J.E."/>
            <person name="Humphray S."/>
            <person name="McLaren K."/>
            <person name="Matthews L."/>
            <person name="McLaren S."/>
            <person name="Sealy I."/>
            <person name="Caccamo M."/>
            <person name="Churcher C."/>
            <person name="Scott C."/>
            <person name="Barrett J.C."/>
            <person name="Koch R."/>
            <person name="Rauch G.J."/>
            <person name="White S."/>
            <person name="Chow W."/>
            <person name="Kilian B."/>
            <person name="Quintais L.T."/>
            <person name="Guerra-Assuncao J.A."/>
            <person name="Zhou Y."/>
            <person name="Gu Y."/>
            <person name="Yen J."/>
            <person name="Vogel J.H."/>
            <person name="Eyre T."/>
            <person name="Redmond S."/>
            <person name="Banerjee R."/>
            <person name="Chi J."/>
            <person name="Fu B."/>
            <person name="Langley E."/>
            <person name="Maguire S.F."/>
            <person name="Laird G.K."/>
            <person name="Lloyd D."/>
            <person name="Kenyon E."/>
            <person name="Donaldson S."/>
            <person name="Sehra H."/>
            <person name="Almeida-King J."/>
            <person name="Loveland J."/>
            <person name="Trevanion S."/>
            <person name="Jones M."/>
            <person name="Quail M."/>
            <person name="Willey D."/>
            <person name="Hunt A."/>
            <person name="Burton J."/>
            <person name="Sims S."/>
            <person name="McLay K."/>
            <person name="Plumb B."/>
            <person name="Davis J."/>
            <person name="Clee C."/>
            <person name="Oliver K."/>
            <person name="Clark R."/>
            <person name="Riddle C."/>
            <person name="Elliot D."/>
            <person name="Threadgold G."/>
            <person name="Harden G."/>
            <person name="Ware D."/>
            <person name="Begum S."/>
            <person name="Mortimore B."/>
            <person name="Kerry G."/>
            <person name="Heath P."/>
            <person name="Phillimore B."/>
            <person name="Tracey A."/>
            <person name="Corby N."/>
            <person name="Dunn M."/>
            <person name="Johnson C."/>
            <person name="Wood J."/>
            <person name="Clark S."/>
            <person name="Pelan S."/>
            <person name="Griffiths G."/>
            <person name="Smith M."/>
            <person name="Glithero R."/>
            <person name="Howden P."/>
            <person name="Barker N."/>
            <person name="Lloyd C."/>
            <person name="Stevens C."/>
            <person name="Harley J."/>
            <person name="Holt K."/>
            <person name="Panagiotidis G."/>
            <person name="Lovell J."/>
            <person name="Beasley H."/>
            <person name="Henderson C."/>
            <person name="Gordon D."/>
            <person name="Auger K."/>
            <person name="Wright D."/>
            <person name="Collins J."/>
            <person name="Raisen C."/>
            <person name="Dyer L."/>
            <person name="Leung K."/>
            <person name="Robertson L."/>
            <person name="Ambridge K."/>
            <person name="Leongamornlert D."/>
            <person name="McGuire S."/>
            <person name="Gilderthorp R."/>
            <person name="Griffiths C."/>
            <person name="Manthravadi D."/>
            <person name="Nichol S."/>
            <person name="Barker G."/>
            <person name="Whitehead S."/>
            <person name="Kay M."/>
            <person name="Brown J."/>
            <person name="Murnane C."/>
            <person name="Gray E."/>
            <person name="Humphries M."/>
            <person name="Sycamore N."/>
            <person name="Barker D."/>
            <person name="Saunders D."/>
            <person name="Wallis J."/>
            <person name="Babbage A."/>
            <person name="Hammond S."/>
            <person name="Mashreghi-Mohammadi M."/>
            <person name="Barr L."/>
            <person name="Martin S."/>
            <person name="Wray P."/>
            <person name="Ellington A."/>
            <person name="Matthews N."/>
            <person name="Ellwood M."/>
            <person name="Woodmansey R."/>
            <person name="Clark G."/>
            <person name="Cooper J."/>
            <person name="Tromans A."/>
            <person name="Grafham D."/>
            <person name="Skuce C."/>
            <person name="Pandian R."/>
            <person name="Andrews R."/>
            <person name="Harrison E."/>
            <person name="Kimberley A."/>
            <person name="Garnett J."/>
            <person name="Fosker N."/>
            <person name="Hall R."/>
            <person name="Garner P."/>
            <person name="Kelly D."/>
            <person name="Bird C."/>
            <person name="Palmer S."/>
            <person name="Gehring I."/>
            <person name="Berger A."/>
            <person name="Dooley C.M."/>
            <person name="Ersan-Urun Z."/>
            <person name="Eser C."/>
            <person name="Geiger H."/>
            <person name="Geisler M."/>
            <person name="Karotki L."/>
            <person name="Kirn A."/>
            <person name="Konantz J."/>
            <person name="Konantz M."/>
            <person name="Oberlander M."/>
            <person name="Rudolph-Geiger S."/>
            <person name="Teucke M."/>
            <person name="Lanz C."/>
            <person name="Raddatz G."/>
            <person name="Osoegawa K."/>
            <person name="Zhu B."/>
            <person name="Rapp A."/>
            <person name="Widaa S."/>
            <person name="Langford C."/>
            <person name="Yang F."/>
            <person name="Schuster S.C."/>
            <person name="Carter N.P."/>
            <person name="Harrow J."/>
            <person name="Ning Z."/>
            <person name="Herrero J."/>
            <person name="Searle S.M."/>
            <person name="Enright A."/>
            <person name="Geisler R."/>
            <person name="Plasterk R.H."/>
            <person name="Lee C."/>
            <person name="Westerfield M."/>
            <person name="de Jong P.J."/>
            <person name="Zon L.I."/>
            <person name="Postlethwait J.H."/>
            <person name="Nusslein-Volhard C."/>
            <person name="Hubbard T.J."/>
            <person name="Roest Crollius H."/>
            <person name="Rogers J."/>
            <person name="Stemple D.L."/>
        </authorList>
    </citation>
    <scope>NUCLEOTIDE SEQUENCE [LARGE SCALE GENOMIC DNA]</scope>
    <source>
        <strain>Tuebingen</strain>
    </source>
</reference>
<reference key="2">
    <citation type="submission" date="2008-04" db="EMBL/GenBank/DDBJ databases">
        <authorList>
            <consortium name="NIH - Zebrafish Gene Collection (ZGC) project"/>
        </authorList>
    </citation>
    <scope>NUCLEOTIDE SEQUENCE [LARGE SCALE MRNA] (ISOFORM 2)</scope>
</reference>
<keyword id="KW-0025">Alternative splicing</keyword>
<keyword id="KW-0131">Cell cycle</keyword>
<keyword id="KW-0132">Cell division</keyword>
<keyword id="KW-0963">Cytoplasm</keyword>
<keyword id="KW-0498">Mitosis</keyword>
<keyword id="KW-0597">Phosphoprotein</keyword>
<keyword id="KW-0650">Protein phosphatase inhibitor</keyword>
<keyword id="KW-1185">Reference proteome</keyword>